<reference evidence="5 6" key="1">
    <citation type="journal article" date="2007" name="Peptides">
        <title>A combined mass spectrometric and cDNA sequencing approach to the isolation and characterization of novel antimicrobial peptides from the skin secretions of Phyllomedusa hypochondrialis azurea.</title>
        <authorList>
            <person name="Thompson A.H."/>
            <person name="Bjourson A.J."/>
            <person name="Orr D.F."/>
            <person name="Shaw C."/>
            <person name="McClean S."/>
        </authorList>
    </citation>
    <scope>NUCLEOTIDE SEQUENCE [MRNA]</scope>
    <scope>PROTEIN SEQUENCE OF 38-56</scope>
    <scope>FUNCTION</scope>
    <scope>SUBCELLULAR LOCATION</scope>
    <scope>TISSUE SPECIFICITY</scope>
    <scope>MASS SPECTROMETRY</scope>
    <scope>AMIDATION AT LEU-56</scope>
    <source>
        <tissue>Skin</tissue>
        <tissue evidence="3">Skin secretion</tissue>
    </source>
</reference>
<organism>
    <name type="scientific">Pithecopus azureus</name>
    <name type="common">Orange-legged monkey tree frog</name>
    <name type="synonym">Phyllomedusa azurea</name>
    <dbReference type="NCBI Taxonomy" id="2034991"/>
    <lineage>
        <taxon>Eukaryota</taxon>
        <taxon>Metazoa</taxon>
        <taxon>Chordata</taxon>
        <taxon>Craniata</taxon>
        <taxon>Vertebrata</taxon>
        <taxon>Euteleostomi</taxon>
        <taxon>Amphibia</taxon>
        <taxon>Batrachia</taxon>
        <taxon>Anura</taxon>
        <taxon>Neobatrachia</taxon>
        <taxon>Hyloidea</taxon>
        <taxon>Hylidae</taxon>
        <taxon>Phyllomedusinae</taxon>
        <taxon>Pithecopus</taxon>
    </lineage>
</organism>
<evidence type="ECO:0000255" key="1"/>
<evidence type="ECO:0000256" key="2">
    <source>
        <dbReference type="SAM" id="MobiDB-lite"/>
    </source>
</evidence>
<evidence type="ECO:0000269" key="3">
    <source>
    </source>
</evidence>
<evidence type="ECO:0000303" key="4">
    <source>
    </source>
</evidence>
<evidence type="ECO:0000305" key="5"/>
<evidence type="ECO:0000312" key="6">
    <source>
        <dbReference type="EMBL" id="CAK51560.1"/>
    </source>
</evidence>
<dbReference type="EMBL" id="AM269411">
    <property type="protein sequence ID" value="CAK51560.1"/>
    <property type="molecule type" value="mRNA"/>
</dbReference>
<dbReference type="GO" id="GO:0005576">
    <property type="term" value="C:extracellular region"/>
    <property type="evidence" value="ECO:0007669"/>
    <property type="project" value="UniProtKB-SubCell"/>
</dbReference>
<dbReference type="GO" id="GO:0042742">
    <property type="term" value="P:defense response to bacterium"/>
    <property type="evidence" value="ECO:0007669"/>
    <property type="project" value="UniProtKB-KW"/>
</dbReference>
<dbReference type="InterPro" id="IPR004275">
    <property type="entry name" value="Frog_antimicrobial_propeptide"/>
</dbReference>
<dbReference type="Pfam" id="PF03032">
    <property type="entry name" value="FSAP_sig_propep"/>
    <property type="match status" value="1"/>
</dbReference>
<accession>Q17UY9</accession>
<keyword id="KW-0027">Amidation</keyword>
<keyword id="KW-0878">Amphibian defense peptide</keyword>
<keyword id="KW-0044">Antibiotic</keyword>
<keyword id="KW-0929">Antimicrobial</keyword>
<keyword id="KW-0165">Cleavage on pair of basic residues</keyword>
<keyword id="KW-0903">Direct protein sequencing</keyword>
<keyword id="KW-0964">Secreted</keyword>
<keyword id="KW-0732">Signal</keyword>
<comment type="function">
    <text evidence="3">Has antibacterial activity against the Gram-positive bacterium M.luteus ATCC 49732 (MIC=1.3 uM). Does not inhibit the growth of the fungus C.albicans.</text>
</comment>
<comment type="subcellular location">
    <subcellularLocation>
        <location evidence="3">Secreted</location>
    </subcellularLocation>
</comment>
<comment type="tissue specificity">
    <text evidence="3">Expressed by the skin glands.</text>
</comment>
<comment type="mass spectrometry"/>
<comment type="similarity">
    <text evidence="1">Belongs to the frog skin active peptide (FSAP) family. Phylloseptin subfamily.</text>
</comment>
<comment type="online information" name="The antimicrobial peptide database">
    <link uri="https://wangapd3.com/database/query_output.php?ID=00977"/>
</comment>
<proteinExistence type="evidence at protein level"/>
<gene>
    <name type="primary">psn12</name>
    <name type="synonym">ppp-12</name>
    <name type="synonym">psn-12</name>
</gene>
<sequence>LVLFLGLVSLSICEEEKRETEEEENDQEEDDKSEEKRFLSLLPSIVSGAVSLAKKLG</sequence>
<protein>
    <recommendedName>
        <fullName evidence="5">Phylloseptin-Az4</fullName>
        <shortName evidence="5">PLS-Az4</shortName>
    </recommendedName>
    <alternativeName>
        <fullName evidence="4 6">Phylloseptin-12</fullName>
        <shortName evidence="4">PS-12</shortName>
    </alternativeName>
</protein>
<name>PLS4_PITAZ</name>
<feature type="signal peptide" evidence="1">
    <location>
        <begin position="1" status="less than"/>
        <end position="13"/>
    </location>
</feature>
<feature type="propeptide" id="PRO_0000248618" evidence="3">
    <location>
        <begin position="14"/>
        <end position="35"/>
    </location>
</feature>
<feature type="peptide" id="PRO_0000248619" description="Phylloseptin-Az4">
    <location>
        <begin position="38"/>
        <end position="56"/>
    </location>
</feature>
<feature type="region of interest" description="Disordered" evidence="2">
    <location>
        <begin position="16"/>
        <end position="35"/>
    </location>
</feature>
<feature type="compositionally biased region" description="Acidic residues" evidence="2">
    <location>
        <begin position="21"/>
        <end position="32"/>
    </location>
</feature>
<feature type="modified residue" description="Leucine amide" evidence="3">
    <location>
        <position position="56"/>
    </location>
</feature>
<feature type="non-terminal residue" evidence="6">
    <location>
        <position position="1"/>
    </location>
</feature>